<name>RSMG_MYCGA</name>
<dbReference type="EC" id="2.1.1.-" evidence="1"/>
<dbReference type="EMBL" id="L35043">
    <property type="protein sequence ID" value="AAF36756.1"/>
    <property type="molecule type" value="Genomic_DNA"/>
</dbReference>
<dbReference type="EMBL" id="AE015450">
    <property type="protein sequence ID" value="AAP56994.1"/>
    <property type="molecule type" value="Genomic_DNA"/>
</dbReference>
<dbReference type="RefSeq" id="WP_011113904.1">
    <property type="nucleotide sequence ID" value="NC_004829.2"/>
</dbReference>
<dbReference type="SMR" id="Q9KX67"/>
<dbReference type="KEGG" id="mga:MGA_0470"/>
<dbReference type="PATRIC" id="fig|233150.7.peg.721"/>
<dbReference type="HOGENOM" id="CLU_065341_0_1_14"/>
<dbReference type="OrthoDB" id="9808773at2"/>
<dbReference type="Proteomes" id="UP000001418">
    <property type="component" value="Chromosome"/>
</dbReference>
<dbReference type="GO" id="GO:0005829">
    <property type="term" value="C:cytosol"/>
    <property type="evidence" value="ECO:0007669"/>
    <property type="project" value="TreeGrafter"/>
</dbReference>
<dbReference type="GO" id="GO:0070043">
    <property type="term" value="F:rRNA (guanine-N7-)-methyltransferase activity"/>
    <property type="evidence" value="ECO:0007669"/>
    <property type="project" value="UniProtKB-UniRule"/>
</dbReference>
<dbReference type="CDD" id="cd02440">
    <property type="entry name" value="AdoMet_MTases"/>
    <property type="match status" value="1"/>
</dbReference>
<dbReference type="Gene3D" id="3.40.50.150">
    <property type="entry name" value="Vaccinia Virus protein VP39"/>
    <property type="match status" value="1"/>
</dbReference>
<dbReference type="HAMAP" id="MF_00074">
    <property type="entry name" value="16SrRNA_methyltr_G"/>
    <property type="match status" value="1"/>
</dbReference>
<dbReference type="InterPro" id="IPR003682">
    <property type="entry name" value="rRNA_ssu_MeTfrase_G"/>
</dbReference>
<dbReference type="InterPro" id="IPR029063">
    <property type="entry name" value="SAM-dependent_MTases_sf"/>
</dbReference>
<dbReference type="NCBIfam" id="TIGR00138">
    <property type="entry name" value="rsmG_gidB"/>
    <property type="match status" value="1"/>
</dbReference>
<dbReference type="PANTHER" id="PTHR31760">
    <property type="entry name" value="S-ADENOSYL-L-METHIONINE-DEPENDENT METHYLTRANSFERASES SUPERFAMILY PROTEIN"/>
    <property type="match status" value="1"/>
</dbReference>
<dbReference type="PANTHER" id="PTHR31760:SF0">
    <property type="entry name" value="S-ADENOSYL-L-METHIONINE-DEPENDENT METHYLTRANSFERASES SUPERFAMILY PROTEIN"/>
    <property type="match status" value="1"/>
</dbReference>
<dbReference type="Pfam" id="PF02527">
    <property type="entry name" value="GidB"/>
    <property type="match status" value="1"/>
</dbReference>
<dbReference type="PIRSF" id="PIRSF003078">
    <property type="entry name" value="GidB"/>
    <property type="match status" value="1"/>
</dbReference>
<dbReference type="SUPFAM" id="SSF53335">
    <property type="entry name" value="S-adenosyl-L-methionine-dependent methyltransferases"/>
    <property type="match status" value="1"/>
</dbReference>
<evidence type="ECO:0000255" key="1">
    <source>
        <dbReference type="HAMAP-Rule" id="MF_00074"/>
    </source>
</evidence>
<comment type="function">
    <text evidence="1">Specifically methylates the N7 position of a guanine in 16S rRNA.</text>
</comment>
<comment type="subcellular location">
    <subcellularLocation>
        <location evidence="1">Cytoplasm</location>
    </subcellularLocation>
</comment>
<comment type="similarity">
    <text evidence="1">Belongs to the methyltransferase superfamily. RNA methyltransferase RsmG family.</text>
</comment>
<keyword id="KW-0963">Cytoplasm</keyword>
<keyword id="KW-0489">Methyltransferase</keyword>
<keyword id="KW-1185">Reference proteome</keyword>
<keyword id="KW-0698">rRNA processing</keyword>
<keyword id="KW-0949">S-adenosyl-L-methionine</keyword>
<keyword id="KW-0808">Transferase</keyword>
<proteinExistence type="inferred from homology"/>
<reference key="1">
    <citation type="submission" date="2000-02" db="EMBL/GenBank/DDBJ databases">
        <authorList>
            <person name="Skamrov A.V."/>
            <person name="Feoktistova E.S."/>
            <person name="Gol'dman M.A."/>
            <person name="Bibilashvili R.S."/>
        </authorList>
    </citation>
    <scope>NUCLEOTIDE SEQUENCE [GENOMIC DNA]</scope>
    <source>
        <strain>A5969Var.B</strain>
    </source>
</reference>
<reference key="2">
    <citation type="journal article" date="2003" name="Microbiology">
        <title>The complete genome sequence of the avian pathogen Mycoplasma gallisepticum strain R(low).</title>
        <authorList>
            <person name="Papazisi L."/>
            <person name="Gorton T.S."/>
            <person name="Kutish G."/>
            <person name="Markham P.F."/>
            <person name="Browning G.F."/>
            <person name="Nguyen D.K."/>
            <person name="Swartzell S."/>
            <person name="Madan A."/>
            <person name="Mahairas G."/>
            <person name="Geary S.J."/>
        </authorList>
    </citation>
    <scope>NUCLEOTIDE SEQUENCE [LARGE SCALE GENOMIC DNA]</scope>
    <source>
        <strain>R(low / passage 15 / clone 2)</strain>
    </source>
</reference>
<sequence>MLKLIKDSLGKFNLTLTDKQIEDIAFFLEEIYHSNQLFNLTGYKTKELIAEMLGVKTILLAQSLSYIFSNQSLNVIDIGTGAGIPGLIIKIIYPQLNVYLVDSNAKKITFINEVIKKLNFTGVFAILSRVEDNFFLKKYHGYFDYVFSQAVSKIAVLNELGTQLLKINGQIIHFKSRDYQEEIEFAKKHLSDLGLAFNNLYHYQFNSYFLVNVFYNKKAIAPQKYPREWSKIKRELIDDAKH</sequence>
<protein>
    <recommendedName>
        <fullName evidence="1">Ribosomal RNA small subunit methyltransferase G</fullName>
        <ecNumber evidence="1">2.1.1.-</ecNumber>
    </recommendedName>
    <alternativeName>
        <fullName evidence="1">16S rRNA 7-methylguanosine methyltransferase</fullName>
        <shortName evidence="1">16S rRNA m7G methyltransferase</shortName>
    </alternativeName>
    <alternativeName>
        <fullName>Glucose-inhibited division protein B</fullName>
    </alternativeName>
</protein>
<feature type="chain" id="PRO_0000184285" description="Ribosomal RNA small subunit methyltransferase G">
    <location>
        <begin position="1"/>
        <end position="242"/>
    </location>
</feature>
<feature type="binding site" evidence="1">
    <location>
        <position position="79"/>
    </location>
    <ligand>
        <name>S-adenosyl-L-methionine</name>
        <dbReference type="ChEBI" id="CHEBI:59789"/>
    </ligand>
</feature>
<feature type="binding site" evidence="1">
    <location>
        <begin position="130"/>
        <end position="131"/>
    </location>
    <ligand>
        <name>S-adenosyl-L-methionine</name>
        <dbReference type="ChEBI" id="CHEBI:59789"/>
    </ligand>
</feature>
<feature type="binding site" evidence="1">
    <location>
        <position position="149"/>
    </location>
    <ligand>
        <name>S-adenosyl-L-methionine</name>
        <dbReference type="ChEBI" id="CHEBI:59789"/>
    </ligand>
</feature>
<accession>Q9KX67</accession>
<gene>
    <name evidence="1" type="primary">rsmG</name>
    <name type="synonym">gidB</name>
    <name type="ordered locus">MYCGA6440</name>
    <name type="ORF">MGA_0470</name>
</gene>
<organism>
    <name type="scientific">Mycoplasmoides gallisepticum (strain R(low / passage 15 / clone 2))</name>
    <name type="common">Mycoplasma gallisepticum</name>
    <dbReference type="NCBI Taxonomy" id="710127"/>
    <lineage>
        <taxon>Bacteria</taxon>
        <taxon>Bacillati</taxon>
        <taxon>Mycoplasmatota</taxon>
        <taxon>Mycoplasmoidales</taxon>
        <taxon>Mycoplasmoidaceae</taxon>
        <taxon>Mycoplasmoides</taxon>
    </lineage>
</organism>